<organism>
    <name type="scientific">Renibacterium salmoninarum (strain ATCC 33209 / DSM 20767 / JCM 11484 / NBRC 15589 / NCIMB 2235)</name>
    <dbReference type="NCBI Taxonomy" id="288705"/>
    <lineage>
        <taxon>Bacteria</taxon>
        <taxon>Bacillati</taxon>
        <taxon>Actinomycetota</taxon>
        <taxon>Actinomycetes</taxon>
        <taxon>Micrococcales</taxon>
        <taxon>Micrococcaceae</taxon>
        <taxon>Renibacterium</taxon>
    </lineage>
</organism>
<protein>
    <recommendedName>
        <fullName evidence="1">ATP synthase subunit delta</fullName>
    </recommendedName>
    <alternativeName>
        <fullName evidence="1">ATP synthase F(1) sector subunit delta</fullName>
    </alternativeName>
    <alternativeName>
        <fullName evidence="1">F-type ATPase subunit delta</fullName>
        <shortName evidence="1">F-ATPase subunit delta</shortName>
    </alternativeName>
</protein>
<comment type="function">
    <text evidence="1">F(1)F(0) ATP synthase produces ATP from ADP in the presence of a proton or sodium gradient. F-type ATPases consist of two structural domains, F(1) containing the extramembraneous catalytic core and F(0) containing the membrane proton channel, linked together by a central stalk and a peripheral stalk. During catalysis, ATP synthesis in the catalytic domain of F(1) is coupled via a rotary mechanism of the central stalk subunits to proton translocation.</text>
</comment>
<comment type="function">
    <text evidence="1">This protein is part of the stalk that links CF(0) to CF(1). It either transmits conformational changes from CF(0) to CF(1) or is implicated in proton conduction.</text>
</comment>
<comment type="subunit">
    <text evidence="1">F-type ATPases have 2 components, F(1) - the catalytic core - and F(0) - the membrane proton channel. F(1) has five subunits: alpha(3), beta(3), gamma(1), delta(1), epsilon(1). F(0) has three main subunits: a(1), b(2) and c(10-14). The alpha and beta chains form an alternating ring which encloses part of the gamma chain. F(1) is attached to F(0) by a central stalk formed by the gamma and epsilon chains, while a peripheral stalk is formed by the delta and b chains.</text>
</comment>
<comment type="subcellular location">
    <subcellularLocation>
        <location evidence="1">Cell membrane</location>
        <topology evidence="1">Peripheral membrane protein</topology>
    </subcellularLocation>
</comment>
<comment type="similarity">
    <text evidence="1">Belongs to the ATPase delta chain family.</text>
</comment>
<evidence type="ECO:0000255" key="1">
    <source>
        <dbReference type="HAMAP-Rule" id="MF_01416"/>
    </source>
</evidence>
<accession>A9WNC5</accession>
<name>ATPD_RENSM</name>
<gene>
    <name evidence="1" type="primary">atpH</name>
    <name type="ordered locus">RSal33209_1445</name>
</gene>
<reference key="1">
    <citation type="journal article" date="2008" name="J. Bacteriol.">
        <title>Genome sequence of the fish pathogen Renibacterium salmoninarum suggests reductive evolution away from an environmental Arthrobacter ancestor.</title>
        <authorList>
            <person name="Wiens G.D."/>
            <person name="Rockey D.D."/>
            <person name="Wu Z."/>
            <person name="Chang J."/>
            <person name="Levy R."/>
            <person name="Crane S."/>
            <person name="Chen D.S."/>
            <person name="Capri G.R."/>
            <person name="Burnett J.R."/>
            <person name="Sudheesh P.S."/>
            <person name="Schipma M.J."/>
            <person name="Burd H."/>
            <person name="Bhattacharyya A."/>
            <person name="Rhodes L.D."/>
            <person name="Kaul R."/>
            <person name="Strom M.S."/>
        </authorList>
    </citation>
    <scope>NUCLEOTIDE SEQUENCE [LARGE SCALE GENOMIC DNA]</scope>
    <source>
        <strain>ATCC 33209 / DSM 20767 / JCM 11484 / NBRC 15589 / NCIMB 2235</strain>
    </source>
</reference>
<keyword id="KW-0066">ATP synthesis</keyword>
<keyword id="KW-1003">Cell membrane</keyword>
<keyword id="KW-0139">CF(1)</keyword>
<keyword id="KW-0375">Hydrogen ion transport</keyword>
<keyword id="KW-0406">Ion transport</keyword>
<keyword id="KW-0472">Membrane</keyword>
<keyword id="KW-1185">Reference proteome</keyword>
<keyword id="KW-0813">Transport</keyword>
<dbReference type="EMBL" id="CP000910">
    <property type="protein sequence ID" value="ABY23181.1"/>
    <property type="molecule type" value="Genomic_DNA"/>
</dbReference>
<dbReference type="RefSeq" id="WP_012244862.1">
    <property type="nucleotide sequence ID" value="NC_010168.1"/>
</dbReference>
<dbReference type="SMR" id="A9WNC5"/>
<dbReference type="STRING" id="288705.RSal33209_1445"/>
<dbReference type="KEGG" id="rsa:RSal33209_1445"/>
<dbReference type="eggNOG" id="COG0712">
    <property type="taxonomic scope" value="Bacteria"/>
</dbReference>
<dbReference type="HOGENOM" id="CLU_088880_0_0_11"/>
<dbReference type="Proteomes" id="UP000002007">
    <property type="component" value="Chromosome"/>
</dbReference>
<dbReference type="GO" id="GO:0005886">
    <property type="term" value="C:plasma membrane"/>
    <property type="evidence" value="ECO:0007669"/>
    <property type="project" value="UniProtKB-SubCell"/>
</dbReference>
<dbReference type="GO" id="GO:0045259">
    <property type="term" value="C:proton-transporting ATP synthase complex"/>
    <property type="evidence" value="ECO:0007669"/>
    <property type="project" value="UniProtKB-KW"/>
</dbReference>
<dbReference type="GO" id="GO:0046933">
    <property type="term" value="F:proton-transporting ATP synthase activity, rotational mechanism"/>
    <property type="evidence" value="ECO:0007669"/>
    <property type="project" value="UniProtKB-UniRule"/>
</dbReference>
<dbReference type="HAMAP" id="MF_01416">
    <property type="entry name" value="ATP_synth_delta_bact"/>
    <property type="match status" value="1"/>
</dbReference>
<dbReference type="InterPro" id="IPR020781">
    <property type="entry name" value="ATPase_OSCP/d_CS"/>
</dbReference>
<dbReference type="InterPro" id="IPR000711">
    <property type="entry name" value="ATPase_OSCP/dsu"/>
</dbReference>
<dbReference type="NCBIfam" id="TIGR01145">
    <property type="entry name" value="ATP_synt_delta"/>
    <property type="match status" value="1"/>
</dbReference>
<dbReference type="NCBIfam" id="NF009967">
    <property type="entry name" value="PRK13430.1"/>
    <property type="match status" value="1"/>
</dbReference>
<dbReference type="PANTHER" id="PTHR11910">
    <property type="entry name" value="ATP SYNTHASE DELTA CHAIN"/>
    <property type="match status" value="1"/>
</dbReference>
<dbReference type="Pfam" id="PF00213">
    <property type="entry name" value="OSCP"/>
    <property type="match status" value="1"/>
</dbReference>
<dbReference type="PRINTS" id="PR00125">
    <property type="entry name" value="ATPASEDELTA"/>
</dbReference>
<dbReference type="PROSITE" id="PS00389">
    <property type="entry name" value="ATPASE_DELTA"/>
    <property type="match status" value="1"/>
</dbReference>
<feature type="chain" id="PRO_0000382144" description="ATP synthase subunit delta">
    <location>
        <begin position="1"/>
        <end position="271"/>
    </location>
</feature>
<proteinExistence type="inferred from homology"/>
<sequence length="271" mass="28410">MAGISSDSRAKVLAELESVLPTATAQLARELFSVLAVVDSSAGLRRALTDPSREGKDKAALLSSLVRGKVSAQAEQIVDSLAKERWASARDLGDALETVAATVAIAVAENEAPGAEGLEKLENDLFVFNQTVAANHQVQRALSEPQASAEAKQKLASALVPGASQVAELLIGQAVAAPRGARPAKLVEQFATLAAARQQRWIATVTVGQALNKNQEARLSAGLNNLYGRDLKVNISVDPTLIGGVRVRVGDEVVDASVVNRLGELRRQLAG</sequence>